<gene>
    <name type="primary">citX</name>
    <name type="ordered locus">VC_0800</name>
</gene>
<name>CITX_VIBCH</name>
<comment type="function">
    <text evidence="1">Transfers 2-(5''-triphosphoribosyl)-3'-dephosphocoenzyme-A on a serine residue to the apo-acyl carrier protein (gamma chain) of the citrate lyase to yield holo-acyl carrier protein.</text>
</comment>
<comment type="catalytic activity">
    <reaction>
        <text>apo-[citrate lyase ACP] + 2'-(5''-triphospho-alpha-D-ribosyl)-3'-dephospho-CoA = holo-[citrate lyase ACP] + diphosphate</text>
        <dbReference type="Rhea" id="RHEA:16333"/>
        <dbReference type="Rhea" id="RHEA-COMP:10157"/>
        <dbReference type="Rhea" id="RHEA-COMP:10158"/>
        <dbReference type="ChEBI" id="CHEBI:29999"/>
        <dbReference type="ChEBI" id="CHEBI:33019"/>
        <dbReference type="ChEBI" id="CHEBI:61378"/>
        <dbReference type="ChEBI" id="CHEBI:82683"/>
        <dbReference type="EC" id="2.7.7.61"/>
    </reaction>
</comment>
<comment type="similarity">
    <text evidence="2">Belongs to the CitX family.</text>
</comment>
<keyword id="KW-0548">Nucleotidyltransferase</keyword>
<keyword id="KW-1185">Reference proteome</keyword>
<keyword id="KW-0808">Transferase</keyword>
<proteinExistence type="inferred from homology"/>
<reference key="1">
    <citation type="journal article" date="2000" name="Nature">
        <title>DNA sequence of both chromosomes of the cholera pathogen Vibrio cholerae.</title>
        <authorList>
            <person name="Heidelberg J.F."/>
            <person name="Eisen J.A."/>
            <person name="Nelson W.C."/>
            <person name="Clayton R.A."/>
            <person name="Gwinn M.L."/>
            <person name="Dodson R.J."/>
            <person name="Haft D.H."/>
            <person name="Hickey E.K."/>
            <person name="Peterson J.D."/>
            <person name="Umayam L.A."/>
            <person name="Gill S.R."/>
            <person name="Nelson K.E."/>
            <person name="Read T.D."/>
            <person name="Tettelin H."/>
            <person name="Richardson D.L."/>
            <person name="Ermolaeva M.D."/>
            <person name="Vamathevan J.J."/>
            <person name="Bass S."/>
            <person name="Qin H."/>
            <person name="Dragoi I."/>
            <person name="Sellers P."/>
            <person name="McDonald L.A."/>
            <person name="Utterback T.R."/>
            <person name="Fleischmann R.D."/>
            <person name="Nierman W.C."/>
            <person name="White O."/>
            <person name="Salzberg S.L."/>
            <person name="Smith H.O."/>
            <person name="Colwell R.R."/>
            <person name="Mekalanos J.J."/>
            <person name="Venter J.C."/>
            <person name="Fraser C.M."/>
        </authorList>
    </citation>
    <scope>NUCLEOTIDE SEQUENCE [LARGE SCALE GENOMIC DNA]</scope>
    <source>
        <strain>ATCC 39315 / El Tor Inaba N16961</strain>
    </source>
</reference>
<organism>
    <name type="scientific">Vibrio cholerae serotype O1 (strain ATCC 39315 / El Tor Inaba N16961)</name>
    <dbReference type="NCBI Taxonomy" id="243277"/>
    <lineage>
        <taxon>Bacteria</taxon>
        <taxon>Pseudomonadati</taxon>
        <taxon>Pseudomonadota</taxon>
        <taxon>Gammaproteobacteria</taxon>
        <taxon>Vibrionales</taxon>
        <taxon>Vibrionaceae</taxon>
        <taxon>Vibrio</taxon>
    </lineage>
</organism>
<evidence type="ECO:0000250" key="1"/>
<evidence type="ECO:0000305" key="2"/>
<feature type="chain" id="PRO_0000214692" description="Probable apo-citrate lyase phosphoribosyl-dephospho-CoA transferase">
    <location>
        <begin position="1"/>
        <end position="178"/>
    </location>
</feature>
<protein>
    <recommendedName>
        <fullName>Probable apo-citrate lyase phosphoribosyl-dephospho-CoA transferase</fullName>
        <ecNumber>2.7.7.61</ecNumber>
    </recommendedName>
    <alternativeName>
        <fullName>Apo-ACP nucleodityltransferase</fullName>
    </alternativeName>
    <alternativeName>
        <fullName>Holo-ACP synthase</fullName>
    </alternativeName>
    <alternativeName>
        <fullName>Holo-citrate lyase synthase</fullName>
    </alternativeName>
</protein>
<sequence length="178" mass="20050">MSHHPDLSVSLDQLLLRKEVRVRQQGEWLKRHSLPLVSFTVNMPGAVKLNAASQTVMDAGMRAIQELCQKTGWRQVACQLLVEKTGPEAFVVIQAPSASMLKKAMMKIEREHPLGRLMDLDVIDVDGHIISRQGAQLPRRRCLLCERDAVICARSRRHSVEALLAKIEEMTHDYSCCA</sequence>
<dbReference type="EC" id="2.7.7.61"/>
<dbReference type="EMBL" id="AE003852">
    <property type="protein sequence ID" value="AAF93964.1"/>
    <property type="molecule type" value="Genomic_DNA"/>
</dbReference>
<dbReference type="PIR" id="B82278">
    <property type="entry name" value="B82278"/>
</dbReference>
<dbReference type="RefSeq" id="NP_230449.1">
    <property type="nucleotide sequence ID" value="NC_002505.1"/>
</dbReference>
<dbReference type="RefSeq" id="WP_000018088.1">
    <property type="nucleotide sequence ID" value="NZ_LT906614.1"/>
</dbReference>
<dbReference type="SMR" id="Q9KTT8"/>
<dbReference type="STRING" id="243277.VC_0800"/>
<dbReference type="DNASU" id="2615343"/>
<dbReference type="EnsemblBacteria" id="AAF93964">
    <property type="protein sequence ID" value="AAF93964"/>
    <property type="gene ID" value="VC_0800"/>
</dbReference>
<dbReference type="KEGG" id="vch:VC_0800"/>
<dbReference type="PATRIC" id="fig|243277.26.peg.763"/>
<dbReference type="eggNOG" id="COG3697">
    <property type="taxonomic scope" value="Bacteria"/>
</dbReference>
<dbReference type="HOGENOM" id="CLU_104529_1_0_6"/>
<dbReference type="Proteomes" id="UP000000584">
    <property type="component" value="Chromosome 1"/>
</dbReference>
<dbReference type="GO" id="GO:0050519">
    <property type="term" value="F:holo-citrate lyase synthase activity"/>
    <property type="evidence" value="ECO:0007669"/>
    <property type="project" value="UniProtKB-UniRule"/>
</dbReference>
<dbReference type="GO" id="GO:0051191">
    <property type="term" value="P:prosthetic group biosynthetic process"/>
    <property type="evidence" value="ECO:0007669"/>
    <property type="project" value="InterPro"/>
</dbReference>
<dbReference type="HAMAP" id="MF_00398">
    <property type="entry name" value="CitX"/>
    <property type="match status" value="1"/>
</dbReference>
<dbReference type="InterPro" id="IPR005551">
    <property type="entry name" value="CitX"/>
</dbReference>
<dbReference type="NCBIfam" id="TIGR03124">
    <property type="entry name" value="citrate_citX"/>
    <property type="match status" value="1"/>
</dbReference>
<dbReference type="NCBIfam" id="NF002383">
    <property type="entry name" value="PRK01392.1"/>
    <property type="match status" value="1"/>
</dbReference>
<dbReference type="Pfam" id="PF03802">
    <property type="entry name" value="CitX"/>
    <property type="match status" value="1"/>
</dbReference>
<accession>Q9KTT8</accession>